<evidence type="ECO:0000255" key="1">
    <source>
        <dbReference type="HAMAP-Rule" id="MF_00377"/>
    </source>
</evidence>
<evidence type="ECO:0000256" key="2">
    <source>
        <dbReference type="SAM" id="MobiDB-lite"/>
    </source>
</evidence>
<sequence>MSVALWQQCLNFLQDELSSQQFNTWIRPLQAEDGDANELCLLAPNRFVRDWVNDKYLKRINELLRDLASGKPPKVQLTVGSRRNVAMSSPRDLGAPVSATTMNASRPTEAPAVHAAPRAKGDYADEQEIDRLREREETPRRGGGERQVQVEGSLKHQSGLNPNFTFETFVEGKSNQLARAASRQVAENPGGAYNPLFLYGGVGLGKTHLMHAVGNHLAGQRENAKVVYLHSERFVADMVKALQLNAINDFKRFYRSVDALLIDDIQFFAGKERSQEEFFHTFNALLEGGQQMILTSDRYPKEISGVEERLKSRFGWGLTVAIEPPELETRVAILMKKADQAKVDLPHDAAFFIAQKIRSNVRELEGALKKVIADSHFMGKPITQDFIRESLKDLLALQDKQVGVDNIQRTVAEYYKIKLADLLSKRRSRSVARPRQVAMALAKELTNHSLPEIGDAFGGRDHTTVLHACRKVQTLKEESADIREDYKNLLRLLTS</sequence>
<feature type="chain" id="PRO_1000048630" description="Chromosomal replication initiator protein DnaA">
    <location>
        <begin position="1"/>
        <end position="495"/>
    </location>
</feature>
<feature type="region of interest" description="Domain I, interacts with DnaA modulators" evidence="1">
    <location>
        <begin position="1"/>
        <end position="83"/>
    </location>
</feature>
<feature type="region of interest" description="Domain II" evidence="1">
    <location>
        <begin position="83"/>
        <end position="158"/>
    </location>
</feature>
<feature type="region of interest" description="Disordered" evidence="2">
    <location>
        <begin position="86"/>
        <end position="127"/>
    </location>
</feature>
<feature type="region of interest" description="Domain III, AAA+ region" evidence="1">
    <location>
        <begin position="159"/>
        <end position="375"/>
    </location>
</feature>
<feature type="region of interest" description="Domain IV, binds dsDNA" evidence="1">
    <location>
        <begin position="376"/>
        <end position="495"/>
    </location>
</feature>
<feature type="binding site" evidence="1">
    <location>
        <position position="203"/>
    </location>
    <ligand>
        <name>ATP</name>
        <dbReference type="ChEBI" id="CHEBI:30616"/>
    </ligand>
</feature>
<feature type="binding site" evidence="1">
    <location>
        <position position="205"/>
    </location>
    <ligand>
        <name>ATP</name>
        <dbReference type="ChEBI" id="CHEBI:30616"/>
    </ligand>
</feature>
<feature type="binding site" evidence="1">
    <location>
        <position position="206"/>
    </location>
    <ligand>
        <name>ATP</name>
        <dbReference type="ChEBI" id="CHEBI:30616"/>
    </ligand>
</feature>
<feature type="binding site" evidence="1">
    <location>
        <position position="207"/>
    </location>
    <ligand>
        <name>ATP</name>
        <dbReference type="ChEBI" id="CHEBI:30616"/>
    </ligand>
</feature>
<proteinExistence type="inferred from homology"/>
<comment type="function">
    <text evidence="1">Plays an essential role in the initiation and regulation of chromosomal replication. ATP-DnaA binds to the origin of replication (oriC) to initiate formation of the DNA replication initiation complex once per cell cycle. Binds the DnaA box (a 9 base pair repeat at the origin) and separates the double-stranded (ds)DNA. Forms a right-handed helical filament on oriC DNA; dsDNA binds to the exterior of the filament while single-stranded (ss)DNA is stabiized in the filament's interior. The ATP-DnaA-oriC complex binds and stabilizes one strand of the AT-rich DNA unwinding element (DUE), permitting loading of DNA polymerase. After initiation quickly degrades to an ADP-DnaA complex that is not apt for DNA replication. Binds acidic phospholipids.</text>
</comment>
<comment type="subunit">
    <text evidence="1">Oligomerizes as a right-handed, spiral filament on DNA at oriC.</text>
</comment>
<comment type="subcellular location">
    <subcellularLocation>
        <location evidence="1">Cytoplasm</location>
    </subcellularLocation>
</comment>
<comment type="domain">
    <text evidence="1">Domain I is involved in oligomerization and binding regulators, domain II is flexibile and of varying length in different bacteria, domain III forms the AAA+ region, while domain IV binds dsDNA.</text>
</comment>
<comment type="similarity">
    <text evidence="1">Belongs to the DnaA family.</text>
</comment>
<gene>
    <name evidence="1" type="primary">dnaA</name>
    <name type="ordered locus">Csal_0001</name>
</gene>
<organism>
    <name type="scientific">Chromohalobacter salexigens (strain ATCC BAA-138 / DSM 3043 / CIP 106854 / NCIMB 13768 / 1H11)</name>
    <dbReference type="NCBI Taxonomy" id="290398"/>
    <lineage>
        <taxon>Bacteria</taxon>
        <taxon>Pseudomonadati</taxon>
        <taxon>Pseudomonadota</taxon>
        <taxon>Gammaproteobacteria</taxon>
        <taxon>Oceanospirillales</taxon>
        <taxon>Halomonadaceae</taxon>
        <taxon>Chromohalobacter</taxon>
    </lineage>
</organism>
<accession>Q1R1P2</accession>
<dbReference type="EMBL" id="CP000285">
    <property type="protein sequence ID" value="ABE57366.1"/>
    <property type="molecule type" value="Genomic_DNA"/>
</dbReference>
<dbReference type="RefSeq" id="WP_011505312.1">
    <property type="nucleotide sequence ID" value="NC_007963.1"/>
</dbReference>
<dbReference type="SMR" id="Q1R1P2"/>
<dbReference type="STRING" id="290398.Csal_0001"/>
<dbReference type="GeneID" id="95332754"/>
<dbReference type="KEGG" id="csa:Csal_0001"/>
<dbReference type="eggNOG" id="COG0593">
    <property type="taxonomic scope" value="Bacteria"/>
</dbReference>
<dbReference type="HOGENOM" id="CLU_026910_0_1_6"/>
<dbReference type="OrthoDB" id="9807019at2"/>
<dbReference type="Proteomes" id="UP000000239">
    <property type="component" value="Chromosome"/>
</dbReference>
<dbReference type="GO" id="GO:0005737">
    <property type="term" value="C:cytoplasm"/>
    <property type="evidence" value="ECO:0007669"/>
    <property type="project" value="UniProtKB-SubCell"/>
</dbReference>
<dbReference type="GO" id="GO:0005886">
    <property type="term" value="C:plasma membrane"/>
    <property type="evidence" value="ECO:0007669"/>
    <property type="project" value="TreeGrafter"/>
</dbReference>
<dbReference type="GO" id="GO:0005524">
    <property type="term" value="F:ATP binding"/>
    <property type="evidence" value="ECO:0007669"/>
    <property type="project" value="UniProtKB-UniRule"/>
</dbReference>
<dbReference type="GO" id="GO:0016887">
    <property type="term" value="F:ATP hydrolysis activity"/>
    <property type="evidence" value="ECO:0007669"/>
    <property type="project" value="InterPro"/>
</dbReference>
<dbReference type="GO" id="GO:0003688">
    <property type="term" value="F:DNA replication origin binding"/>
    <property type="evidence" value="ECO:0007669"/>
    <property type="project" value="UniProtKB-UniRule"/>
</dbReference>
<dbReference type="GO" id="GO:0008289">
    <property type="term" value="F:lipid binding"/>
    <property type="evidence" value="ECO:0007669"/>
    <property type="project" value="UniProtKB-KW"/>
</dbReference>
<dbReference type="GO" id="GO:0006270">
    <property type="term" value="P:DNA replication initiation"/>
    <property type="evidence" value="ECO:0007669"/>
    <property type="project" value="UniProtKB-UniRule"/>
</dbReference>
<dbReference type="GO" id="GO:0006275">
    <property type="term" value="P:regulation of DNA replication"/>
    <property type="evidence" value="ECO:0007669"/>
    <property type="project" value="UniProtKB-UniRule"/>
</dbReference>
<dbReference type="CDD" id="cd00009">
    <property type="entry name" value="AAA"/>
    <property type="match status" value="1"/>
</dbReference>
<dbReference type="CDD" id="cd06571">
    <property type="entry name" value="Bac_DnaA_C"/>
    <property type="match status" value="1"/>
</dbReference>
<dbReference type="FunFam" id="1.10.1750.10:FF:000001">
    <property type="entry name" value="Chromosomal replication initiator protein DnaA"/>
    <property type="match status" value="1"/>
</dbReference>
<dbReference type="FunFam" id="1.10.8.60:FF:000003">
    <property type="entry name" value="Chromosomal replication initiator protein DnaA"/>
    <property type="match status" value="1"/>
</dbReference>
<dbReference type="FunFam" id="3.40.50.300:FF:000103">
    <property type="entry name" value="Chromosomal replication initiator protein DnaA"/>
    <property type="match status" value="1"/>
</dbReference>
<dbReference type="Gene3D" id="1.10.1750.10">
    <property type="match status" value="1"/>
</dbReference>
<dbReference type="Gene3D" id="1.10.8.60">
    <property type="match status" value="1"/>
</dbReference>
<dbReference type="Gene3D" id="3.30.300.180">
    <property type="match status" value="1"/>
</dbReference>
<dbReference type="Gene3D" id="3.40.50.300">
    <property type="entry name" value="P-loop containing nucleotide triphosphate hydrolases"/>
    <property type="match status" value="1"/>
</dbReference>
<dbReference type="HAMAP" id="MF_00377">
    <property type="entry name" value="DnaA_bact"/>
    <property type="match status" value="1"/>
</dbReference>
<dbReference type="InterPro" id="IPR003593">
    <property type="entry name" value="AAA+_ATPase"/>
</dbReference>
<dbReference type="InterPro" id="IPR001957">
    <property type="entry name" value="Chromosome_initiator_DnaA"/>
</dbReference>
<dbReference type="InterPro" id="IPR020591">
    <property type="entry name" value="Chromosome_initiator_DnaA-like"/>
</dbReference>
<dbReference type="InterPro" id="IPR018312">
    <property type="entry name" value="Chromosome_initiator_DnaA_CS"/>
</dbReference>
<dbReference type="InterPro" id="IPR013159">
    <property type="entry name" value="DnaA_C"/>
</dbReference>
<dbReference type="InterPro" id="IPR013317">
    <property type="entry name" value="DnaA_dom"/>
</dbReference>
<dbReference type="InterPro" id="IPR024633">
    <property type="entry name" value="DnaA_N_dom"/>
</dbReference>
<dbReference type="InterPro" id="IPR038454">
    <property type="entry name" value="DnaA_N_sf"/>
</dbReference>
<dbReference type="InterPro" id="IPR027417">
    <property type="entry name" value="P-loop_NTPase"/>
</dbReference>
<dbReference type="InterPro" id="IPR010921">
    <property type="entry name" value="Trp_repressor/repl_initiator"/>
</dbReference>
<dbReference type="NCBIfam" id="TIGR00362">
    <property type="entry name" value="DnaA"/>
    <property type="match status" value="1"/>
</dbReference>
<dbReference type="PANTHER" id="PTHR30050">
    <property type="entry name" value="CHROMOSOMAL REPLICATION INITIATOR PROTEIN DNAA"/>
    <property type="match status" value="1"/>
</dbReference>
<dbReference type="PANTHER" id="PTHR30050:SF2">
    <property type="entry name" value="CHROMOSOMAL REPLICATION INITIATOR PROTEIN DNAA"/>
    <property type="match status" value="1"/>
</dbReference>
<dbReference type="Pfam" id="PF00308">
    <property type="entry name" value="Bac_DnaA"/>
    <property type="match status" value="1"/>
</dbReference>
<dbReference type="Pfam" id="PF08299">
    <property type="entry name" value="Bac_DnaA_C"/>
    <property type="match status" value="1"/>
</dbReference>
<dbReference type="Pfam" id="PF11638">
    <property type="entry name" value="DnaA_N"/>
    <property type="match status" value="1"/>
</dbReference>
<dbReference type="PRINTS" id="PR00051">
    <property type="entry name" value="DNAA"/>
</dbReference>
<dbReference type="SMART" id="SM00382">
    <property type="entry name" value="AAA"/>
    <property type="match status" value="1"/>
</dbReference>
<dbReference type="SMART" id="SM00760">
    <property type="entry name" value="Bac_DnaA_C"/>
    <property type="match status" value="1"/>
</dbReference>
<dbReference type="SUPFAM" id="SSF52540">
    <property type="entry name" value="P-loop containing nucleoside triphosphate hydrolases"/>
    <property type="match status" value="1"/>
</dbReference>
<dbReference type="SUPFAM" id="SSF48295">
    <property type="entry name" value="TrpR-like"/>
    <property type="match status" value="1"/>
</dbReference>
<dbReference type="PROSITE" id="PS01008">
    <property type="entry name" value="DNAA"/>
    <property type="match status" value="1"/>
</dbReference>
<name>DNAA_CHRSD</name>
<keyword id="KW-0067">ATP-binding</keyword>
<keyword id="KW-0963">Cytoplasm</keyword>
<keyword id="KW-0235">DNA replication</keyword>
<keyword id="KW-0238">DNA-binding</keyword>
<keyword id="KW-0446">Lipid-binding</keyword>
<keyword id="KW-0547">Nucleotide-binding</keyword>
<keyword id="KW-1185">Reference proteome</keyword>
<protein>
    <recommendedName>
        <fullName evidence="1">Chromosomal replication initiator protein DnaA</fullName>
    </recommendedName>
</protein>
<reference key="1">
    <citation type="journal article" date="2011" name="Stand. Genomic Sci.">
        <title>Complete genome sequence of the halophilic and highly halotolerant Chromohalobacter salexigens type strain (1H11(T)).</title>
        <authorList>
            <person name="Copeland A."/>
            <person name="O'Connor K."/>
            <person name="Lucas S."/>
            <person name="Lapidus A."/>
            <person name="Berry K.W."/>
            <person name="Detter J.C."/>
            <person name="Del Rio T.G."/>
            <person name="Hammon N."/>
            <person name="Dalin E."/>
            <person name="Tice H."/>
            <person name="Pitluck S."/>
            <person name="Bruce D."/>
            <person name="Goodwin L."/>
            <person name="Han C."/>
            <person name="Tapia R."/>
            <person name="Saunders E."/>
            <person name="Schmutz J."/>
            <person name="Brettin T."/>
            <person name="Larimer F."/>
            <person name="Land M."/>
            <person name="Hauser L."/>
            <person name="Vargas C."/>
            <person name="Nieto J.J."/>
            <person name="Kyrpides N.C."/>
            <person name="Ivanova N."/>
            <person name="Goker M."/>
            <person name="Klenk H.P."/>
            <person name="Csonka L.N."/>
            <person name="Woyke T."/>
        </authorList>
    </citation>
    <scope>NUCLEOTIDE SEQUENCE [LARGE SCALE GENOMIC DNA]</scope>
    <source>
        <strain>ATCC BAA-138 / DSM 3043 / CIP 106854 / NCIMB 13768 / 1H11</strain>
    </source>
</reference>